<name>GCST_THET2</name>
<keyword id="KW-0032">Aminotransferase</keyword>
<keyword id="KW-0808">Transferase</keyword>
<protein>
    <recommendedName>
        <fullName evidence="1">Aminomethyltransferase</fullName>
        <ecNumber evidence="1">2.1.2.10</ecNumber>
    </recommendedName>
    <alternativeName>
        <fullName evidence="1">Glycine cleavage system T protein</fullName>
    </alternativeName>
</protein>
<sequence length="349" mass="37884">MKKTPLYEAHLRLGARMVDFAGYLLPLQYTSIVEEHLAVRRAVGVFDVSHMGEFLVRGEEALAFLQWATANDAGKLKVGRAQYSMLPNERGGVVDDIYLYRLGEEEYLMVVNAANIAKDLAHLQALAKGFRVELEDASERTALLALQGPKAQALLQGLVDVDLSTKRKNDVFPARVAGRPARLARTGYTGEDGFELFLAPEDAEPVFLALVEAGAKPAGLGARDSLRLEAGFPLYGHELTEETNPLCTPWAWVVKKEKAFLGKEAMLAQACRERLVGLVLEGGIPREGYRVLSGGCPVGRVTSGGYSPLLQRGIALAYVEEGAEGPFQVEVRGRAVPAALSPLPFVPLK</sequence>
<organism>
    <name type="scientific">Thermus thermophilus (strain ATCC BAA-163 / DSM 7039 / HB27)</name>
    <dbReference type="NCBI Taxonomy" id="262724"/>
    <lineage>
        <taxon>Bacteria</taxon>
        <taxon>Thermotogati</taxon>
        <taxon>Deinococcota</taxon>
        <taxon>Deinococci</taxon>
        <taxon>Thermales</taxon>
        <taxon>Thermaceae</taxon>
        <taxon>Thermus</taxon>
    </lineage>
</organism>
<accession>Q72LB1</accession>
<comment type="function">
    <text evidence="1">The glycine cleavage system catalyzes the degradation of glycine.</text>
</comment>
<comment type="catalytic activity">
    <reaction evidence="1">
        <text>N(6)-[(R)-S(8)-aminomethyldihydrolipoyl]-L-lysyl-[protein] + (6S)-5,6,7,8-tetrahydrofolate = N(6)-[(R)-dihydrolipoyl]-L-lysyl-[protein] + (6R)-5,10-methylene-5,6,7,8-tetrahydrofolate + NH4(+)</text>
        <dbReference type="Rhea" id="RHEA:16945"/>
        <dbReference type="Rhea" id="RHEA-COMP:10475"/>
        <dbReference type="Rhea" id="RHEA-COMP:10492"/>
        <dbReference type="ChEBI" id="CHEBI:15636"/>
        <dbReference type="ChEBI" id="CHEBI:28938"/>
        <dbReference type="ChEBI" id="CHEBI:57453"/>
        <dbReference type="ChEBI" id="CHEBI:83100"/>
        <dbReference type="ChEBI" id="CHEBI:83143"/>
        <dbReference type="EC" id="2.1.2.10"/>
    </reaction>
</comment>
<comment type="subunit">
    <text evidence="1">The glycine cleavage system is composed of four proteins: P, T, L and H.</text>
</comment>
<comment type="similarity">
    <text evidence="1">Belongs to the GcvT family.</text>
</comment>
<gene>
    <name evidence="1" type="primary">gcvT</name>
    <name type="ordered locus">TT_C0148</name>
</gene>
<dbReference type="EC" id="2.1.2.10" evidence="1"/>
<dbReference type="EMBL" id="AE017221">
    <property type="protein sequence ID" value="AAS80496.1"/>
    <property type="molecule type" value="Genomic_DNA"/>
</dbReference>
<dbReference type="RefSeq" id="WP_011172603.1">
    <property type="nucleotide sequence ID" value="NC_005835.1"/>
</dbReference>
<dbReference type="SMR" id="Q72LB1"/>
<dbReference type="KEGG" id="tth:TT_C0148"/>
<dbReference type="eggNOG" id="COG0404">
    <property type="taxonomic scope" value="Bacteria"/>
</dbReference>
<dbReference type="HOGENOM" id="CLU_007884_10_2_0"/>
<dbReference type="OrthoDB" id="9774591at2"/>
<dbReference type="Proteomes" id="UP000000592">
    <property type="component" value="Chromosome"/>
</dbReference>
<dbReference type="GO" id="GO:0005829">
    <property type="term" value="C:cytosol"/>
    <property type="evidence" value="ECO:0007669"/>
    <property type="project" value="TreeGrafter"/>
</dbReference>
<dbReference type="GO" id="GO:0005960">
    <property type="term" value="C:glycine cleavage complex"/>
    <property type="evidence" value="ECO:0007669"/>
    <property type="project" value="InterPro"/>
</dbReference>
<dbReference type="GO" id="GO:0004047">
    <property type="term" value="F:aminomethyltransferase activity"/>
    <property type="evidence" value="ECO:0007669"/>
    <property type="project" value="UniProtKB-UniRule"/>
</dbReference>
<dbReference type="GO" id="GO:0008483">
    <property type="term" value="F:transaminase activity"/>
    <property type="evidence" value="ECO:0007669"/>
    <property type="project" value="UniProtKB-KW"/>
</dbReference>
<dbReference type="GO" id="GO:0019464">
    <property type="term" value="P:glycine decarboxylation via glycine cleavage system"/>
    <property type="evidence" value="ECO:0007669"/>
    <property type="project" value="UniProtKB-UniRule"/>
</dbReference>
<dbReference type="Gene3D" id="3.30.1360.120">
    <property type="entry name" value="Probable tRNA modification gtpase trme, domain 1"/>
    <property type="match status" value="1"/>
</dbReference>
<dbReference type="HAMAP" id="MF_00259">
    <property type="entry name" value="GcvT"/>
    <property type="match status" value="1"/>
</dbReference>
<dbReference type="InterPro" id="IPR006223">
    <property type="entry name" value="GCS_T"/>
</dbReference>
<dbReference type="InterPro" id="IPR022903">
    <property type="entry name" value="GCS_T_bac"/>
</dbReference>
<dbReference type="InterPro" id="IPR013977">
    <property type="entry name" value="GCST_C"/>
</dbReference>
<dbReference type="InterPro" id="IPR006222">
    <property type="entry name" value="GCV_T_N"/>
</dbReference>
<dbReference type="InterPro" id="IPR028896">
    <property type="entry name" value="GcvT/YgfZ/DmdA"/>
</dbReference>
<dbReference type="InterPro" id="IPR029043">
    <property type="entry name" value="GcvT/YgfZ_C"/>
</dbReference>
<dbReference type="InterPro" id="IPR027266">
    <property type="entry name" value="TrmE/GcvT_dom1"/>
</dbReference>
<dbReference type="NCBIfam" id="TIGR00528">
    <property type="entry name" value="gcvT"/>
    <property type="match status" value="1"/>
</dbReference>
<dbReference type="NCBIfam" id="NF001567">
    <property type="entry name" value="PRK00389.1"/>
    <property type="match status" value="1"/>
</dbReference>
<dbReference type="PANTHER" id="PTHR43757">
    <property type="entry name" value="AMINOMETHYLTRANSFERASE"/>
    <property type="match status" value="1"/>
</dbReference>
<dbReference type="PANTHER" id="PTHR43757:SF2">
    <property type="entry name" value="AMINOMETHYLTRANSFERASE, MITOCHONDRIAL"/>
    <property type="match status" value="1"/>
</dbReference>
<dbReference type="Pfam" id="PF01571">
    <property type="entry name" value="GCV_T"/>
    <property type="match status" value="1"/>
</dbReference>
<dbReference type="Pfam" id="PF08669">
    <property type="entry name" value="GCV_T_C"/>
    <property type="match status" value="1"/>
</dbReference>
<dbReference type="PIRSF" id="PIRSF006487">
    <property type="entry name" value="GcvT"/>
    <property type="match status" value="1"/>
</dbReference>
<dbReference type="SUPFAM" id="SSF101790">
    <property type="entry name" value="Aminomethyltransferase beta-barrel domain"/>
    <property type="match status" value="1"/>
</dbReference>
<dbReference type="SUPFAM" id="SSF103025">
    <property type="entry name" value="Folate-binding domain"/>
    <property type="match status" value="1"/>
</dbReference>
<feature type="chain" id="PRO_0000122611" description="Aminomethyltransferase">
    <location>
        <begin position="1"/>
        <end position="349"/>
    </location>
</feature>
<evidence type="ECO:0000255" key="1">
    <source>
        <dbReference type="HAMAP-Rule" id="MF_00259"/>
    </source>
</evidence>
<reference key="1">
    <citation type="journal article" date="2004" name="Nat. Biotechnol.">
        <title>The genome sequence of the extreme thermophile Thermus thermophilus.</title>
        <authorList>
            <person name="Henne A."/>
            <person name="Brueggemann H."/>
            <person name="Raasch C."/>
            <person name="Wiezer A."/>
            <person name="Hartsch T."/>
            <person name="Liesegang H."/>
            <person name="Johann A."/>
            <person name="Lienard T."/>
            <person name="Gohl O."/>
            <person name="Martinez-Arias R."/>
            <person name="Jacobi C."/>
            <person name="Starkuviene V."/>
            <person name="Schlenczeck S."/>
            <person name="Dencker S."/>
            <person name="Huber R."/>
            <person name="Klenk H.-P."/>
            <person name="Kramer W."/>
            <person name="Merkl R."/>
            <person name="Gottschalk G."/>
            <person name="Fritz H.-J."/>
        </authorList>
    </citation>
    <scope>NUCLEOTIDE SEQUENCE [LARGE SCALE GENOMIC DNA]</scope>
    <source>
        <strain>ATCC BAA-163 / DSM 7039 / HB27</strain>
    </source>
</reference>
<proteinExistence type="inferred from homology"/>